<dbReference type="EMBL" id="BX897699">
    <property type="protein sequence ID" value="CAF27410.1"/>
    <property type="molecule type" value="Genomic_DNA"/>
</dbReference>
<dbReference type="RefSeq" id="WP_011180530.1">
    <property type="nucleotide sequence ID" value="NZ_LRIJ02000001.1"/>
</dbReference>
<dbReference type="SMR" id="Q6G3X9"/>
<dbReference type="PaxDb" id="283166-BH06060"/>
<dbReference type="EnsemblBacteria" id="CAF27410">
    <property type="protein sequence ID" value="CAF27410"/>
    <property type="gene ID" value="BH06060"/>
</dbReference>
<dbReference type="GeneID" id="92985668"/>
<dbReference type="KEGG" id="bhe:BH06060"/>
<dbReference type="eggNOG" id="COG0080">
    <property type="taxonomic scope" value="Bacteria"/>
</dbReference>
<dbReference type="OrthoDB" id="9802408at2"/>
<dbReference type="Proteomes" id="UP000000421">
    <property type="component" value="Chromosome"/>
</dbReference>
<dbReference type="GO" id="GO:0022625">
    <property type="term" value="C:cytosolic large ribosomal subunit"/>
    <property type="evidence" value="ECO:0007669"/>
    <property type="project" value="TreeGrafter"/>
</dbReference>
<dbReference type="GO" id="GO:0070180">
    <property type="term" value="F:large ribosomal subunit rRNA binding"/>
    <property type="evidence" value="ECO:0007669"/>
    <property type="project" value="UniProtKB-UniRule"/>
</dbReference>
<dbReference type="GO" id="GO:0003735">
    <property type="term" value="F:structural constituent of ribosome"/>
    <property type="evidence" value="ECO:0007669"/>
    <property type="project" value="InterPro"/>
</dbReference>
<dbReference type="GO" id="GO:0006412">
    <property type="term" value="P:translation"/>
    <property type="evidence" value="ECO:0007669"/>
    <property type="project" value="UniProtKB-UniRule"/>
</dbReference>
<dbReference type="CDD" id="cd00349">
    <property type="entry name" value="Ribosomal_L11"/>
    <property type="match status" value="1"/>
</dbReference>
<dbReference type="FunFam" id="1.10.10.250:FF:000001">
    <property type="entry name" value="50S ribosomal protein L11"/>
    <property type="match status" value="1"/>
</dbReference>
<dbReference type="FunFam" id="3.30.1550.10:FF:000001">
    <property type="entry name" value="50S ribosomal protein L11"/>
    <property type="match status" value="1"/>
</dbReference>
<dbReference type="Gene3D" id="1.10.10.250">
    <property type="entry name" value="Ribosomal protein L11, C-terminal domain"/>
    <property type="match status" value="1"/>
</dbReference>
<dbReference type="Gene3D" id="3.30.1550.10">
    <property type="entry name" value="Ribosomal protein L11/L12, N-terminal domain"/>
    <property type="match status" value="1"/>
</dbReference>
<dbReference type="HAMAP" id="MF_00736">
    <property type="entry name" value="Ribosomal_uL11"/>
    <property type="match status" value="1"/>
</dbReference>
<dbReference type="InterPro" id="IPR000911">
    <property type="entry name" value="Ribosomal_uL11"/>
</dbReference>
<dbReference type="InterPro" id="IPR006519">
    <property type="entry name" value="Ribosomal_uL11_bac-typ"/>
</dbReference>
<dbReference type="InterPro" id="IPR020783">
    <property type="entry name" value="Ribosomal_uL11_C"/>
</dbReference>
<dbReference type="InterPro" id="IPR036769">
    <property type="entry name" value="Ribosomal_uL11_C_sf"/>
</dbReference>
<dbReference type="InterPro" id="IPR020785">
    <property type="entry name" value="Ribosomal_uL11_CS"/>
</dbReference>
<dbReference type="InterPro" id="IPR020784">
    <property type="entry name" value="Ribosomal_uL11_N"/>
</dbReference>
<dbReference type="InterPro" id="IPR036796">
    <property type="entry name" value="Ribosomal_uL11_N_sf"/>
</dbReference>
<dbReference type="NCBIfam" id="TIGR01632">
    <property type="entry name" value="L11_bact"/>
    <property type="match status" value="1"/>
</dbReference>
<dbReference type="PANTHER" id="PTHR11661">
    <property type="entry name" value="60S RIBOSOMAL PROTEIN L12"/>
    <property type="match status" value="1"/>
</dbReference>
<dbReference type="PANTHER" id="PTHR11661:SF1">
    <property type="entry name" value="LARGE RIBOSOMAL SUBUNIT PROTEIN UL11M"/>
    <property type="match status" value="1"/>
</dbReference>
<dbReference type="Pfam" id="PF00298">
    <property type="entry name" value="Ribosomal_L11"/>
    <property type="match status" value="1"/>
</dbReference>
<dbReference type="Pfam" id="PF03946">
    <property type="entry name" value="Ribosomal_L11_N"/>
    <property type="match status" value="1"/>
</dbReference>
<dbReference type="SMART" id="SM00649">
    <property type="entry name" value="RL11"/>
    <property type="match status" value="1"/>
</dbReference>
<dbReference type="SUPFAM" id="SSF54747">
    <property type="entry name" value="Ribosomal L11/L12e N-terminal domain"/>
    <property type="match status" value="1"/>
</dbReference>
<dbReference type="SUPFAM" id="SSF46906">
    <property type="entry name" value="Ribosomal protein L11, C-terminal domain"/>
    <property type="match status" value="1"/>
</dbReference>
<dbReference type="PROSITE" id="PS00359">
    <property type="entry name" value="RIBOSOMAL_L11"/>
    <property type="match status" value="1"/>
</dbReference>
<reference key="1">
    <citation type="journal article" date="2004" name="Proc. Natl. Acad. Sci. U.S.A.">
        <title>The louse-borne human pathogen Bartonella quintana is a genomic derivative of the zoonotic agent Bartonella henselae.</title>
        <authorList>
            <person name="Alsmark U.C.M."/>
            <person name="Frank A.C."/>
            <person name="Karlberg E.O."/>
            <person name="Legault B.-A."/>
            <person name="Ardell D.H."/>
            <person name="Canbaeck B."/>
            <person name="Eriksson A.-S."/>
            <person name="Naeslund A.K."/>
            <person name="Handley S.A."/>
            <person name="Huvet M."/>
            <person name="La Scola B."/>
            <person name="Holmberg M."/>
            <person name="Andersson S.G.E."/>
        </authorList>
    </citation>
    <scope>NUCLEOTIDE SEQUENCE [LARGE SCALE GENOMIC DNA]</scope>
    <source>
        <strain>ATCC 49882 / DSM 28221 / CCUG 30454 / Houston 1</strain>
    </source>
</reference>
<accession>Q6G3X9</accession>
<sequence length="142" mass="15159">MAKKSIGQLKLQVPAGAATPSPPIGPALGQRGINIMEFCKAFNAATQEMEKGAPIPVIITYYQDKSFTFSLKTPPVSFFLKKEANLKSGSKEPGKVSVGSISRDKIRSIAQAKMKDLNANDIEAAMRMVEGSARSMGLEVVG</sequence>
<organism>
    <name type="scientific">Bartonella henselae (strain ATCC 49882 / DSM 28221 / CCUG 30454 / Houston 1)</name>
    <name type="common">Rochalimaea henselae</name>
    <dbReference type="NCBI Taxonomy" id="283166"/>
    <lineage>
        <taxon>Bacteria</taxon>
        <taxon>Pseudomonadati</taxon>
        <taxon>Pseudomonadota</taxon>
        <taxon>Alphaproteobacteria</taxon>
        <taxon>Hyphomicrobiales</taxon>
        <taxon>Bartonellaceae</taxon>
        <taxon>Bartonella</taxon>
    </lineage>
</organism>
<name>RL11_BARHE</name>
<feature type="chain" id="PRO_0000104247" description="Large ribosomal subunit protein uL11">
    <location>
        <begin position="1"/>
        <end position="142"/>
    </location>
</feature>
<gene>
    <name evidence="1" type="primary">rplK</name>
    <name type="ordered locus">BH06060</name>
</gene>
<protein>
    <recommendedName>
        <fullName evidence="1">Large ribosomal subunit protein uL11</fullName>
    </recommendedName>
    <alternativeName>
        <fullName evidence="2">50S ribosomal protein L11</fullName>
    </alternativeName>
</protein>
<evidence type="ECO:0000255" key="1">
    <source>
        <dbReference type="HAMAP-Rule" id="MF_00736"/>
    </source>
</evidence>
<evidence type="ECO:0000305" key="2"/>
<proteinExistence type="inferred from homology"/>
<keyword id="KW-0488">Methylation</keyword>
<keyword id="KW-0687">Ribonucleoprotein</keyword>
<keyword id="KW-0689">Ribosomal protein</keyword>
<keyword id="KW-0694">RNA-binding</keyword>
<keyword id="KW-0699">rRNA-binding</keyword>
<comment type="function">
    <text evidence="1">Forms part of the ribosomal stalk which helps the ribosome interact with GTP-bound translation factors.</text>
</comment>
<comment type="subunit">
    <text evidence="1">Part of the ribosomal stalk of the 50S ribosomal subunit. Interacts with L10 and the large rRNA to form the base of the stalk. L10 forms an elongated spine to which L12 dimers bind in a sequential fashion forming a multimeric L10(L12)X complex.</text>
</comment>
<comment type="PTM">
    <text evidence="1">One or more lysine residues are methylated.</text>
</comment>
<comment type="similarity">
    <text evidence="1">Belongs to the universal ribosomal protein uL11 family.</text>
</comment>